<evidence type="ECO:0000255" key="1">
    <source>
        <dbReference type="HAMAP-Rule" id="MF_01659"/>
    </source>
</evidence>
<dbReference type="EC" id="2.2.1.9" evidence="1"/>
<dbReference type="EMBL" id="BX571856">
    <property type="protein sequence ID" value="CAG40021.1"/>
    <property type="molecule type" value="Genomic_DNA"/>
</dbReference>
<dbReference type="RefSeq" id="WP_000526678.1">
    <property type="nucleotide sequence ID" value="NC_002952.2"/>
</dbReference>
<dbReference type="SMR" id="Q6GI39"/>
<dbReference type="KEGG" id="sar:SAR1017"/>
<dbReference type="HOGENOM" id="CLU_006051_3_0_9"/>
<dbReference type="UniPathway" id="UPA00079"/>
<dbReference type="UniPathway" id="UPA01057">
    <property type="reaction ID" value="UER00164"/>
</dbReference>
<dbReference type="Proteomes" id="UP000000596">
    <property type="component" value="Chromosome"/>
</dbReference>
<dbReference type="GO" id="GO:0070204">
    <property type="term" value="F:2-succinyl-5-enolpyruvyl-6-hydroxy-3-cyclohexene-1-carboxylic-acid synthase activity"/>
    <property type="evidence" value="ECO:0007669"/>
    <property type="project" value="UniProtKB-UniRule"/>
</dbReference>
<dbReference type="GO" id="GO:0000287">
    <property type="term" value="F:magnesium ion binding"/>
    <property type="evidence" value="ECO:0007669"/>
    <property type="project" value="UniProtKB-UniRule"/>
</dbReference>
<dbReference type="GO" id="GO:0030145">
    <property type="term" value="F:manganese ion binding"/>
    <property type="evidence" value="ECO:0007669"/>
    <property type="project" value="UniProtKB-UniRule"/>
</dbReference>
<dbReference type="GO" id="GO:0030976">
    <property type="term" value="F:thiamine pyrophosphate binding"/>
    <property type="evidence" value="ECO:0007669"/>
    <property type="project" value="UniProtKB-UniRule"/>
</dbReference>
<dbReference type="GO" id="GO:0009234">
    <property type="term" value="P:menaquinone biosynthetic process"/>
    <property type="evidence" value="ECO:0007669"/>
    <property type="project" value="UniProtKB-UniRule"/>
</dbReference>
<dbReference type="CDD" id="cd07037">
    <property type="entry name" value="TPP_PYR_MenD"/>
    <property type="match status" value="1"/>
</dbReference>
<dbReference type="CDD" id="cd02009">
    <property type="entry name" value="TPP_SHCHC_synthase"/>
    <property type="match status" value="1"/>
</dbReference>
<dbReference type="Gene3D" id="3.40.50.970">
    <property type="match status" value="2"/>
</dbReference>
<dbReference type="Gene3D" id="3.40.50.1220">
    <property type="entry name" value="TPP-binding domain"/>
    <property type="match status" value="1"/>
</dbReference>
<dbReference type="HAMAP" id="MF_01659">
    <property type="entry name" value="MenD"/>
    <property type="match status" value="1"/>
</dbReference>
<dbReference type="InterPro" id="IPR004433">
    <property type="entry name" value="MenaQ_synth_MenD"/>
</dbReference>
<dbReference type="InterPro" id="IPR032264">
    <property type="entry name" value="MenD_middle"/>
</dbReference>
<dbReference type="InterPro" id="IPR029061">
    <property type="entry name" value="THDP-binding"/>
</dbReference>
<dbReference type="InterPro" id="IPR012001">
    <property type="entry name" value="Thiamin_PyroP_enz_TPP-bd_dom"/>
</dbReference>
<dbReference type="InterPro" id="IPR011766">
    <property type="entry name" value="TPP_enzyme_TPP-bd"/>
</dbReference>
<dbReference type="NCBIfam" id="TIGR00173">
    <property type="entry name" value="menD"/>
    <property type="match status" value="1"/>
</dbReference>
<dbReference type="PANTHER" id="PTHR42916">
    <property type="entry name" value="2-SUCCINYL-5-ENOLPYRUVYL-6-HYDROXY-3-CYCLOHEXENE-1-CARBOXYLATE SYNTHASE"/>
    <property type="match status" value="1"/>
</dbReference>
<dbReference type="PANTHER" id="PTHR42916:SF1">
    <property type="entry name" value="PROTEIN PHYLLO, CHLOROPLASTIC"/>
    <property type="match status" value="1"/>
</dbReference>
<dbReference type="Pfam" id="PF02775">
    <property type="entry name" value="TPP_enzyme_C"/>
    <property type="match status" value="1"/>
</dbReference>
<dbReference type="Pfam" id="PF16582">
    <property type="entry name" value="TPP_enzyme_M_2"/>
    <property type="match status" value="1"/>
</dbReference>
<dbReference type="Pfam" id="PF02776">
    <property type="entry name" value="TPP_enzyme_N"/>
    <property type="match status" value="1"/>
</dbReference>
<dbReference type="PIRSF" id="PIRSF004983">
    <property type="entry name" value="MenD"/>
    <property type="match status" value="1"/>
</dbReference>
<dbReference type="SUPFAM" id="SSF52518">
    <property type="entry name" value="Thiamin diphosphate-binding fold (THDP-binding)"/>
    <property type="match status" value="2"/>
</dbReference>
<feature type="chain" id="PRO_0000341853" description="2-succinyl-5-enolpyruvyl-6-hydroxy-3-cyclohexene-1-carboxylate synthase">
    <location>
        <begin position="1"/>
        <end position="557"/>
    </location>
</feature>
<gene>
    <name evidence="1" type="primary">menD</name>
    <name type="ordered locus">SAR1017</name>
</gene>
<name>MEND_STAAR</name>
<keyword id="KW-0460">Magnesium</keyword>
<keyword id="KW-0464">Manganese</keyword>
<keyword id="KW-0474">Menaquinone biosynthesis</keyword>
<keyword id="KW-0479">Metal-binding</keyword>
<keyword id="KW-0786">Thiamine pyrophosphate</keyword>
<keyword id="KW-0808">Transferase</keyword>
<proteinExistence type="inferred from homology"/>
<reference key="1">
    <citation type="journal article" date="2004" name="Proc. Natl. Acad. Sci. U.S.A.">
        <title>Complete genomes of two clinical Staphylococcus aureus strains: evidence for the rapid evolution of virulence and drug resistance.</title>
        <authorList>
            <person name="Holden M.T.G."/>
            <person name="Feil E.J."/>
            <person name="Lindsay J.A."/>
            <person name="Peacock S.J."/>
            <person name="Day N.P.J."/>
            <person name="Enright M.C."/>
            <person name="Foster T.J."/>
            <person name="Moore C.E."/>
            <person name="Hurst L."/>
            <person name="Atkin R."/>
            <person name="Barron A."/>
            <person name="Bason N."/>
            <person name="Bentley S.D."/>
            <person name="Chillingworth C."/>
            <person name="Chillingworth T."/>
            <person name="Churcher C."/>
            <person name="Clark L."/>
            <person name="Corton C."/>
            <person name="Cronin A."/>
            <person name="Doggett J."/>
            <person name="Dowd L."/>
            <person name="Feltwell T."/>
            <person name="Hance Z."/>
            <person name="Harris B."/>
            <person name="Hauser H."/>
            <person name="Holroyd S."/>
            <person name="Jagels K."/>
            <person name="James K.D."/>
            <person name="Lennard N."/>
            <person name="Line A."/>
            <person name="Mayes R."/>
            <person name="Moule S."/>
            <person name="Mungall K."/>
            <person name="Ormond D."/>
            <person name="Quail M.A."/>
            <person name="Rabbinowitsch E."/>
            <person name="Rutherford K.M."/>
            <person name="Sanders M."/>
            <person name="Sharp S."/>
            <person name="Simmonds M."/>
            <person name="Stevens K."/>
            <person name="Whitehead S."/>
            <person name="Barrell B.G."/>
            <person name="Spratt B.G."/>
            <person name="Parkhill J."/>
        </authorList>
    </citation>
    <scope>NUCLEOTIDE SEQUENCE [LARGE SCALE GENOMIC DNA]</scope>
    <source>
        <strain>MRSA252</strain>
    </source>
</reference>
<sequence>MGNHKAALTKQVFTFASELYAYGVREVVISPGSRSTPLALAFEAHPNIKTWIHPDERSAAFFAVGLIKGSERPVAILCTSGTAAANYTPAIAESQISRIPLIVLTSDRPHELRSVGAPQAINQVNMFNNYVSYEFDMPIADDSKETIDAIYYQMQIASQYLYGPHKGPIHFNLPFRDPLTPDLNATELLTSEMKILPHYQKSIDASALRHILNKKKGLIIVGDMQHQEVDQILTYSTIYDLPILADPLSHLRKFDHPNVICTYDLLFRSGLDLKVDFVIRVGKPVISKKLNQWLKKTDAFQILVQNNDKIDVFPIAPDISYEISANDFFRSLMEDTTVNRVSWLEKWQRIEKKGRKEIKCYLEQATDESAFVGELIKKTSEKDALFISNSMPIRDVDNLLLNKNIDVYANRGANGIDGIVSTALGMAVHKRVTLLIGDLSFYHDMNGLLMSKLNNIQMNIVLLNNDGGGIFSYLPQKESATDYFERLFGTPTGLDFEYTAKLYQFDFKRFNNVSEFKNATLLSETSTIYELITNREDNFKQHQILYQKLSEMIHDTL</sequence>
<comment type="function">
    <text evidence="1">Catalyzes the thiamine diphosphate-dependent decarboxylation of 2-oxoglutarate and the subsequent addition of the resulting succinic semialdehyde-thiamine pyrophosphate anion to isochorismate to yield 2-succinyl-5-enolpyruvyl-6-hydroxy-3-cyclohexene-1-carboxylate (SEPHCHC).</text>
</comment>
<comment type="catalytic activity">
    <reaction evidence="1">
        <text>isochorismate + 2-oxoglutarate + H(+) = 5-enolpyruvoyl-6-hydroxy-2-succinyl-cyclohex-3-ene-1-carboxylate + CO2</text>
        <dbReference type="Rhea" id="RHEA:25593"/>
        <dbReference type="ChEBI" id="CHEBI:15378"/>
        <dbReference type="ChEBI" id="CHEBI:16526"/>
        <dbReference type="ChEBI" id="CHEBI:16810"/>
        <dbReference type="ChEBI" id="CHEBI:29780"/>
        <dbReference type="ChEBI" id="CHEBI:58818"/>
        <dbReference type="EC" id="2.2.1.9"/>
    </reaction>
</comment>
<comment type="cofactor">
    <cofactor evidence="1">
        <name>Mg(2+)</name>
        <dbReference type="ChEBI" id="CHEBI:18420"/>
    </cofactor>
    <cofactor evidence="1">
        <name>Mn(2+)</name>
        <dbReference type="ChEBI" id="CHEBI:29035"/>
    </cofactor>
</comment>
<comment type="cofactor">
    <cofactor evidence="1">
        <name>thiamine diphosphate</name>
        <dbReference type="ChEBI" id="CHEBI:58937"/>
    </cofactor>
    <text evidence="1">Binds 1 thiamine pyrophosphate per subunit.</text>
</comment>
<comment type="pathway">
    <text evidence="1">Quinol/quinone metabolism; 1,4-dihydroxy-2-naphthoate biosynthesis; 1,4-dihydroxy-2-naphthoate from chorismate: step 2/7.</text>
</comment>
<comment type="pathway">
    <text evidence="1">Quinol/quinone metabolism; menaquinone biosynthesis.</text>
</comment>
<comment type="subunit">
    <text evidence="1">Homodimer.</text>
</comment>
<comment type="similarity">
    <text evidence="1">Belongs to the TPP enzyme family. MenD subfamily.</text>
</comment>
<organism>
    <name type="scientific">Staphylococcus aureus (strain MRSA252)</name>
    <dbReference type="NCBI Taxonomy" id="282458"/>
    <lineage>
        <taxon>Bacteria</taxon>
        <taxon>Bacillati</taxon>
        <taxon>Bacillota</taxon>
        <taxon>Bacilli</taxon>
        <taxon>Bacillales</taxon>
        <taxon>Staphylococcaceae</taxon>
        <taxon>Staphylococcus</taxon>
    </lineage>
</organism>
<protein>
    <recommendedName>
        <fullName evidence="1">2-succinyl-5-enolpyruvyl-6-hydroxy-3-cyclohexene-1-carboxylate synthase</fullName>
        <shortName evidence="1">SEPHCHC synthase</shortName>
        <ecNumber evidence="1">2.2.1.9</ecNumber>
    </recommendedName>
    <alternativeName>
        <fullName evidence="1">Menaquinone biosynthesis protein MenD</fullName>
    </alternativeName>
</protein>
<accession>Q6GI39</accession>